<gene>
    <name type="primary">puhA</name>
    <name type="ordered locus">RHOS4_18960</name>
    <name type="ORF">RSP_0291</name>
</gene>
<accession>Q3J170</accession>
<accession>P11846</accession>
<accession>Q9RFD9</accession>
<comment type="function">
    <text evidence="1">The reaction center is a membrane-bound complex that mediates the initial photochemical event in the electron transfer process of photosynthesis.</text>
</comment>
<comment type="cofactor">
    <cofactor evidence="1">
        <name>a bacteriochlorophyll</name>
        <dbReference type="ChEBI" id="CHEBI:38201"/>
    </cofactor>
    <text evidence="1">Binds 4 bacteriochlorophylls per trimer.</text>
</comment>
<comment type="cofactor">
    <cofactor evidence="1">
        <name>a bacteriopheophytin</name>
        <dbReference type="ChEBI" id="CHEBI:60411"/>
    </cofactor>
    <text evidence="1">Binds 2 bacteriopheophytins per trimer.</text>
</comment>
<comment type="cofactor">
    <cofactor evidence="1">
        <name>Fe cation</name>
        <dbReference type="ChEBI" id="CHEBI:24875"/>
    </cofactor>
    <text evidence="1">Binds 1 Fe cation per trimer.</text>
</comment>
<comment type="cofactor">
    <cofactor evidence="1">
        <name>Mg(2+)</name>
        <dbReference type="ChEBI" id="CHEBI:18420"/>
    </cofactor>
    <text evidence="1">Binds 4 Mg(2+) ions per trimer.</text>
</comment>
<comment type="cofactor">
    <cofactor evidence="1">
        <name>a ubiquinone</name>
        <dbReference type="ChEBI" id="CHEBI:16389"/>
    </cofactor>
    <text evidence="1">Binds 2 ubiquinone per trimer.</text>
</comment>
<comment type="subunit">
    <text evidence="1">Heterotrimer composed of subunits L, M, and H.</text>
</comment>
<comment type="subcellular location">
    <subcellularLocation>
        <location>Cellular chromatophore membrane</location>
        <topology>Single-pass membrane protein</topology>
    </subcellularLocation>
</comment>
<comment type="similarity">
    <text evidence="2">Belongs to the reaction center PuhA family.</text>
</comment>
<feature type="chain" id="PRO_0000090395" description="Reaction center protein H chain">
    <location>
        <begin position="1"/>
        <end position="260"/>
    </location>
</feature>
<feature type="topological domain" description="Periplasmic" evidence="1">
    <location>
        <begin position="1"/>
        <end position="11"/>
    </location>
</feature>
<feature type="transmembrane region" description="Helical" evidence="1">
    <location>
        <begin position="12"/>
        <end position="31"/>
    </location>
</feature>
<feature type="topological domain" description="Cytoplasmic" evidence="1">
    <location>
        <begin position="32"/>
        <end position="260"/>
    </location>
</feature>
<feature type="sequence conflict" description="In Ref. 1; AAF24269." evidence="2" ref="1">
    <original>E</original>
    <variation>Q</variation>
    <location>
        <position position="38"/>
    </location>
</feature>
<feature type="sequence conflict" description="In Ref. 1; AAF24269." evidence="2" ref="1">
    <original>E</original>
    <variation>K</variation>
    <location>
        <position position="81"/>
    </location>
</feature>
<feature type="sequence conflict" description="In Ref. 1; AAF24269." evidence="2" ref="1">
    <original>D</original>
    <variation>N</variation>
    <location>
        <position position="107"/>
    </location>
</feature>
<feature type="strand" evidence="5">
    <location>
        <begin position="5"/>
        <end position="7"/>
    </location>
</feature>
<feature type="helix" evidence="6">
    <location>
        <begin position="12"/>
        <end position="34"/>
    </location>
</feature>
<feature type="strand" evidence="6">
    <location>
        <begin position="37"/>
        <end position="39"/>
    </location>
</feature>
<feature type="strand" evidence="6">
    <location>
        <begin position="47"/>
        <end position="49"/>
    </location>
</feature>
<feature type="strand" evidence="6">
    <location>
        <begin position="62"/>
        <end position="65"/>
    </location>
</feature>
<feature type="turn" evidence="4">
    <location>
        <begin position="67"/>
        <end position="70"/>
    </location>
</feature>
<feature type="strand" evidence="6">
    <location>
        <begin position="72"/>
        <end position="76"/>
    </location>
</feature>
<feature type="strand" evidence="6">
    <location>
        <begin position="87"/>
        <end position="89"/>
    </location>
</feature>
<feature type="strand" evidence="6">
    <location>
        <begin position="92"/>
        <end position="96"/>
    </location>
</feature>
<feature type="strand" evidence="6">
    <location>
        <begin position="98"/>
        <end position="102"/>
    </location>
</feature>
<feature type="helix" evidence="6">
    <location>
        <begin position="104"/>
        <end position="107"/>
    </location>
</feature>
<feature type="helix" evidence="6">
    <location>
        <begin position="110"/>
        <end position="112"/>
    </location>
</feature>
<feature type="strand" evidence="6">
    <location>
        <begin position="127"/>
        <end position="133"/>
    </location>
</feature>
<feature type="helix" evidence="6">
    <location>
        <begin position="134"/>
        <end position="136"/>
    </location>
</feature>
<feature type="strand" evidence="7">
    <location>
        <begin position="137"/>
        <end position="139"/>
    </location>
</feature>
<feature type="strand" evidence="6">
    <location>
        <begin position="141"/>
        <end position="145"/>
    </location>
</feature>
<feature type="strand" evidence="6">
    <location>
        <begin position="152"/>
        <end position="154"/>
    </location>
</feature>
<feature type="strand" evidence="6">
    <location>
        <begin position="160"/>
        <end position="170"/>
    </location>
</feature>
<feature type="turn" evidence="6">
    <location>
        <begin position="171"/>
        <end position="174"/>
    </location>
</feature>
<feature type="strand" evidence="6">
    <location>
        <begin position="175"/>
        <end position="183"/>
    </location>
</feature>
<feature type="strand" evidence="6">
    <location>
        <begin position="188"/>
        <end position="192"/>
    </location>
</feature>
<feature type="helix" evidence="6">
    <location>
        <begin position="193"/>
        <end position="195"/>
    </location>
</feature>
<feature type="strand" evidence="3">
    <location>
        <begin position="197"/>
        <end position="199"/>
    </location>
</feature>
<feature type="strand" evidence="4">
    <location>
        <begin position="203"/>
        <end position="205"/>
    </location>
</feature>
<feature type="strand" evidence="6">
    <location>
        <begin position="206"/>
        <end position="208"/>
    </location>
</feature>
<feature type="helix" evidence="6">
    <location>
        <begin position="210"/>
        <end position="215"/>
    </location>
</feature>
<feature type="helix" evidence="6">
    <location>
        <begin position="227"/>
        <end position="243"/>
    </location>
</feature>
<feature type="helix" evidence="6">
    <location>
        <begin position="245"/>
        <end position="247"/>
    </location>
</feature>
<dbReference type="EMBL" id="AF195122">
    <property type="protein sequence ID" value="AAF24269.1"/>
    <property type="molecule type" value="Genomic_DNA"/>
</dbReference>
<dbReference type="EMBL" id="CP000143">
    <property type="protein sequence ID" value="ABA79464.1"/>
    <property type="molecule type" value="Genomic_DNA"/>
</dbReference>
<dbReference type="PIR" id="T50725">
    <property type="entry name" value="T50725"/>
</dbReference>
<dbReference type="RefSeq" id="WP_002720455.1">
    <property type="nucleotide sequence ID" value="NZ_CP030271.1"/>
</dbReference>
<dbReference type="RefSeq" id="YP_353365.1">
    <property type="nucleotide sequence ID" value="NC_007493.2"/>
</dbReference>
<dbReference type="PDB" id="2WX5">
    <property type="method" value="X-ray"/>
    <property type="resolution" value="2.63 A"/>
    <property type="chains" value="H=1-260"/>
</dbReference>
<dbReference type="PDB" id="4IN5">
    <property type="method" value="X-ray"/>
    <property type="resolution" value="2.20 A"/>
    <property type="chains" value="H=1-260"/>
</dbReference>
<dbReference type="PDB" id="4IN6">
    <property type="method" value="X-ray"/>
    <property type="resolution" value="2.70 A"/>
    <property type="chains" value="H=1-260"/>
</dbReference>
<dbReference type="PDB" id="4N7L">
    <property type="method" value="X-ray"/>
    <property type="resolution" value="2.85 A"/>
    <property type="chains" value="H=11-251"/>
</dbReference>
<dbReference type="PDB" id="5LRI">
    <property type="method" value="X-ray"/>
    <property type="resolution" value="2.40 A"/>
    <property type="chains" value="H=1-260"/>
</dbReference>
<dbReference type="PDB" id="7F0L">
    <property type="method" value="EM"/>
    <property type="resolution" value="2.94 A"/>
    <property type="chains" value="H=1-260"/>
</dbReference>
<dbReference type="PDB" id="7P2C">
    <property type="method" value="X-ray"/>
    <property type="resolution" value="2.04 A"/>
    <property type="chains" value="H=9-250"/>
</dbReference>
<dbReference type="PDB" id="7PIL">
    <property type="method" value="EM"/>
    <property type="resolution" value="2.50 A"/>
    <property type="chains" value="H=1-246"/>
</dbReference>
<dbReference type="PDB" id="7VA9">
    <property type="method" value="EM"/>
    <property type="resolution" value="3.08 A"/>
    <property type="chains" value="H/h=1-260"/>
</dbReference>
<dbReference type="PDB" id="7VB9">
    <property type="method" value="EM"/>
    <property type="resolution" value="3.45 A"/>
    <property type="chains" value="H/h=1-260"/>
</dbReference>
<dbReference type="PDB" id="7VNM">
    <property type="method" value="EM"/>
    <property type="resolution" value="2.86 A"/>
    <property type="chains" value="H=1-260"/>
</dbReference>
<dbReference type="PDB" id="7VNY">
    <property type="method" value="EM"/>
    <property type="resolution" value="2.79 A"/>
    <property type="chains" value="H=1-260"/>
</dbReference>
<dbReference type="PDB" id="7VOR">
    <property type="method" value="EM"/>
    <property type="resolution" value="2.74 A"/>
    <property type="chains" value="H/h=1-260"/>
</dbReference>
<dbReference type="PDB" id="7VOT">
    <property type="method" value="EM"/>
    <property type="resolution" value="2.90 A"/>
    <property type="chains" value="H/h=1-260"/>
</dbReference>
<dbReference type="PDB" id="7VOY">
    <property type="method" value="EM"/>
    <property type="resolution" value="4.20 A"/>
    <property type="chains" value="H=1-260"/>
</dbReference>
<dbReference type="PDBsum" id="2WX5"/>
<dbReference type="PDBsum" id="4IN5"/>
<dbReference type="PDBsum" id="4IN6"/>
<dbReference type="PDBsum" id="4N7L"/>
<dbReference type="PDBsum" id="5LRI"/>
<dbReference type="PDBsum" id="7F0L"/>
<dbReference type="PDBsum" id="7P2C"/>
<dbReference type="PDBsum" id="7PIL"/>
<dbReference type="PDBsum" id="7VA9"/>
<dbReference type="PDBsum" id="7VB9"/>
<dbReference type="PDBsum" id="7VNM"/>
<dbReference type="PDBsum" id="7VNY"/>
<dbReference type="PDBsum" id="7VOR"/>
<dbReference type="PDBsum" id="7VOT"/>
<dbReference type="PDBsum" id="7VOY"/>
<dbReference type="EMDB" id="EMD-13441"/>
<dbReference type="EMDB" id="EMD-13590"/>
<dbReference type="EMDB" id="EMD-31400"/>
<dbReference type="EMDB" id="EMD-31835"/>
<dbReference type="EMDB" id="EMD-31875"/>
<dbReference type="EMDB" id="EMD-32042"/>
<dbReference type="EMDB" id="EMD-32047"/>
<dbReference type="EMDB" id="EMD-32058"/>
<dbReference type="EMDB" id="EMD-32059"/>
<dbReference type="EMDB" id="EMD-32062"/>
<dbReference type="SMR" id="Q3J170"/>
<dbReference type="STRING" id="272943.RSP_0291"/>
<dbReference type="DrugBank" id="DB04147">
    <property type="generic name" value="Dodecyldimethylamine N-oxide"/>
</dbReference>
<dbReference type="EnsemblBacteria" id="ABA79464">
    <property type="protein sequence ID" value="ABA79464"/>
    <property type="gene ID" value="RSP_0291"/>
</dbReference>
<dbReference type="GeneID" id="67447024"/>
<dbReference type="KEGG" id="rsp:RSP_0291"/>
<dbReference type="PATRIC" id="fig|272943.9.peg.2235"/>
<dbReference type="eggNOG" id="COG3861">
    <property type="taxonomic scope" value="Bacteria"/>
</dbReference>
<dbReference type="OrthoDB" id="8557487at2"/>
<dbReference type="PhylomeDB" id="Q3J170"/>
<dbReference type="EvolutionaryTrace" id="Q3J170"/>
<dbReference type="Proteomes" id="UP000002703">
    <property type="component" value="Chromosome 1"/>
</dbReference>
<dbReference type="GO" id="GO:0030077">
    <property type="term" value="C:plasma membrane light-harvesting complex"/>
    <property type="evidence" value="ECO:0007669"/>
    <property type="project" value="InterPro"/>
</dbReference>
<dbReference type="GO" id="GO:0042717">
    <property type="term" value="C:plasma membrane-derived chromatophore membrane"/>
    <property type="evidence" value="ECO:0007669"/>
    <property type="project" value="UniProtKB-SubCell"/>
</dbReference>
<dbReference type="GO" id="GO:0042314">
    <property type="term" value="F:bacteriochlorophyll binding"/>
    <property type="evidence" value="ECO:0007669"/>
    <property type="project" value="UniProtKB-KW"/>
</dbReference>
<dbReference type="GO" id="GO:0045156">
    <property type="term" value="F:electron transporter, transferring electrons within the cyclic electron transport pathway of photosynthesis activity"/>
    <property type="evidence" value="ECO:0007669"/>
    <property type="project" value="InterPro"/>
</dbReference>
<dbReference type="GO" id="GO:0019684">
    <property type="term" value="P:photosynthesis, light reaction"/>
    <property type="evidence" value="ECO:0007669"/>
    <property type="project" value="InterPro"/>
</dbReference>
<dbReference type="CDD" id="cd00226">
    <property type="entry name" value="PRCH"/>
    <property type="match status" value="1"/>
</dbReference>
<dbReference type="Gene3D" id="3.90.50.10">
    <property type="entry name" value="Photosynthetic Reaction Center, subunit H, domain 2"/>
    <property type="match status" value="1"/>
</dbReference>
<dbReference type="Gene3D" id="4.10.540.10">
    <property type="entry name" value="Photosynthetic reaction centre, H subunit, N-terminal domain"/>
    <property type="match status" value="1"/>
</dbReference>
<dbReference type="InterPro" id="IPR014747">
    <property type="entry name" value="Bac_photo_RC_H_C"/>
</dbReference>
<dbReference type="InterPro" id="IPR005652">
    <property type="entry name" value="Photo_RC_H"/>
</dbReference>
<dbReference type="InterPro" id="IPR015810">
    <property type="entry name" value="Photo_RC_H_N"/>
</dbReference>
<dbReference type="InterPro" id="IPR037097">
    <property type="entry name" value="Photo_RC_H_N_sf"/>
</dbReference>
<dbReference type="InterPro" id="IPR027275">
    <property type="entry name" value="PRC-brl_dom"/>
</dbReference>
<dbReference type="InterPro" id="IPR011033">
    <property type="entry name" value="PRC_barrel-like_sf"/>
</dbReference>
<dbReference type="NCBIfam" id="TIGR01150">
    <property type="entry name" value="puhA"/>
    <property type="match status" value="1"/>
</dbReference>
<dbReference type="Pfam" id="PF05239">
    <property type="entry name" value="PRC"/>
    <property type="match status" value="1"/>
</dbReference>
<dbReference type="Pfam" id="PF03967">
    <property type="entry name" value="PRCH"/>
    <property type="match status" value="1"/>
</dbReference>
<dbReference type="SUPFAM" id="SSF81490">
    <property type="entry name" value="Photosystem II reaction centre subunit H, transmembrane region"/>
    <property type="match status" value="1"/>
</dbReference>
<dbReference type="SUPFAM" id="SSF50346">
    <property type="entry name" value="PRC-barrel domain"/>
    <property type="match status" value="1"/>
</dbReference>
<sequence length="260" mass="28035">MVGVTAFGNFDLASLAIYSFWIFLAGLIYYLQTENMREGYPLENEDGTPAANQGPFPLPKPKTFILPHGRGTLTVPGPESEDRPIALARTAVSEGFPHAPTGDPMKDGVGPASWVARRDLPELDGHGHNKIKPMKAAAGFHVSAGKNPIGLPVRGCDLEIAGKVVDIWVDIPEQMARFLEVELKDGSTRLLPMQMVKVQSNRVHVNALSSDLFAGIPTIKSPTEVTLLEEDKICGYVAGGLMYAAPKRKSVVAAMLAEYA</sequence>
<protein>
    <recommendedName>
        <fullName>Reaction center protein H chain</fullName>
    </recommendedName>
    <alternativeName>
        <fullName>Photosynthetic reaction center H subunit</fullName>
    </alternativeName>
</protein>
<keyword id="KW-0002">3D-structure</keyword>
<keyword id="KW-0076">Bacteriochlorophyll</keyword>
<keyword id="KW-0148">Chlorophyll</keyword>
<keyword id="KW-0157">Chromophore</keyword>
<keyword id="KW-0249">Electron transport</keyword>
<keyword id="KW-0472">Membrane</keyword>
<keyword id="KW-0602">Photosynthesis</keyword>
<keyword id="KW-0674">Reaction center</keyword>
<keyword id="KW-1185">Reference proteome</keyword>
<keyword id="KW-0812">Transmembrane</keyword>
<keyword id="KW-1133">Transmembrane helix</keyword>
<keyword id="KW-0813">Transport</keyword>
<reference key="1">
    <citation type="journal article" date="2000" name="Nucleic Acids Res.">
        <title>DNA sequence analysis of the photosynthesis region of Rhodobacter sphaeroides 2.4.1.</title>
        <authorList>
            <person name="Choudhary M."/>
            <person name="Kaplan S."/>
        </authorList>
    </citation>
    <scope>NUCLEOTIDE SEQUENCE [GENOMIC DNA]</scope>
</reference>
<reference key="2">
    <citation type="submission" date="2005-09" db="EMBL/GenBank/DDBJ databases">
        <title>Complete sequence of chromosome 1 of Rhodobacter sphaeroides 2.4.1.</title>
        <authorList>
            <person name="Copeland A."/>
            <person name="Lucas S."/>
            <person name="Lapidus A."/>
            <person name="Barry K."/>
            <person name="Detter J.C."/>
            <person name="Glavina T."/>
            <person name="Hammon N."/>
            <person name="Israni S."/>
            <person name="Pitluck S."/>
            <person name="Richardson P."/>
            <person name="Mackenzie C."/>
            <person name="Choudhary M."/>
            <person name="Larimer F."/>
            <person name="Hauser L.J."/>
            <person name="Land M."/>
            <person name="Donohue T.J."/>
            <person name="Kaplan S."/>
        </authorList>
    </citation>
    <scope>NUCLEOTIDE SEQUENCE [LARGE SCALE GENOMIC DNA]</scope>
    <source>
        <strain>ATCC 17023 / DSM 158 / JCM 6121 / CCUG 31486 / LMG 2827 / NBRC 12203 / NCIMB 8253 / ATH 2.4.1.</strain>
    </source>
</reference>
<organism>
    <name type="scientific">Cereibacter sphaeroides (strain ATCC 17023 / DSM 158 / JCM 6121 / CCUG 31486 / LMG 2827 / NBRC 12203 / NCIMB 8253 / ATH 2.4.1.)</name>
    <name type="common">Rhodobacter sphaeroides</name>
    <dbReference type="NCBI Taxonomy" id="272943"/>
    <lineage>
        <taxon>Bacteria</taxon>
        <taxon>Pseudomonadati</taxon>
        <taxon>Pseudomonadota</taxon>
        <taxon>Alphaproteobacteria</taxon>
        <taxon>Rhodobacterales</taxon>
        <taxon>Paracoccaceae</taxon>
        <taxon>Cereibacter</taxon>
    </lineage>
</organism>
<evidence type="ECO:0000250" key="1"/>
<evidence type="ECO:0000305" key="2"/>
<evidence type="ECO:0007829" key="3">
    <source>
        <dbReference type="PDB" id="2WX5"/>
    </source>
</evidence>
<evidence type="ECO:0007829" key="4">
    <source>
        <dbReference type="PDB" id="4IN5"/>
    </source>
</evidence>
<evidence type="ECO:0007829" key="5">
    <source>
        <dbReference type="PDB" id="7F0L"/>
    </source>
</evidence>
<evidence type="ECO:0007829" key="6">
    <source>
        <dbReference type="PDB" id="7P2C"/>
    </source>
</evidence>
<evidence type="ECO:0007829" key="7">
    <source>
        <dbReference type="PDB" id="7VNM"/>
    </source>
</evidence>
<proteinExistence type="evidence at protein level"/>
<name>RCEH_CERS4</name>